<protein>
    <recommendedName>
        <fullName evidence="1">Malate dehydrogenase</fullName>
        <ecNumber evidence="1">1.1.1.37</ecNumber>
    </recommendedName>
</protein>
<comment type="function">
    <text evidence="1">Catalyzes the reversible oxidation of malate to oxaloacetate.</text>
</comment>
<comment type="catalytic activity">
    <reaction evidence="1">
        <text>(S)-malate + NAD(+) = oxaloacetate + NADH + H(+)</text>
        <dbReference type="Rhea" id="RHEA:21432"/>
        <dbReference type="ChEBI" id="CHEBI:15378"/>
        <dbReference type="ChEBI" id="CHEBI:15589"/>
        <dbReference type="ChEBI" id="CHEBI:16452"/>
        <dbReference type="ChEBI" id="CHEBI:57540"/>
        <dbReference type="ChEBI" id="CHEBI:57945"/>
        <dbReference type="EC" id="1.1.1.37"/>
    </reaction>
</comment>
<comment type="subunit">
    <text evidence="1">Homodimer.</text>
</comment>
<comment type="similarity">
    <text evidence="1">Belongs to the LDH/MDH superfamily. MDH type 1 family.</text>
</comment>
<name>MDH_ECO8A</name>
<keyword id="KW-0520">NAD</keyword>
<keyword id="KW-0560">Oxidoreductase</keyword>
<keyword id="KW-0816">Tricarboxylic acid cycle</keyword>
<feature type="chain" id="PRO_1000191586" description="Malate dehydrogenase">
    <location>
        <begin position="1"/>
        <end position="312"/>
    </location>
</feature>
<feature type="active site" description="Proton acceptor" evidence="1">
    <location>
        <position position="177"/>
    </location>
</feature>
<feature type="binding site" evidence="1">
    <location>
        <begin position="7"/>
        <end position="13"/>
    </location>
    <ligand>
        <name>NAD(+)</name>
        <dbReference type="ChEBI" id="CHEBI:57540"/>
    </ligand>
</feature>
<feature type="binding site" evidence="1">
    <location>
        <position position="34"/>
    </location>
    <ligand>
        <name>NAD(+)</name>
        <dbReference type="ChEBI" id="CHEBI:57540"/>
    </ligand>
</feature>
<feature type="binding site" evidence="1">
    <location>
        <position position="81"/>
    </location>
    <ligand>
        <name>substrate</name>
    </ligand>
</feature>
<feature type="binding site" evidence="1">
    <location>
        <position position="87"/>
    </location>
    <ligand>
        <name>substrate</name>
    </ligand>
</feature>
<feature type="binding site" evidence="1">
    <location>
        <position position="94"/>
    </location>
    <ligand>
        <name>NAD(+)</name>
        <dbReference type="ChEBI" id="CHEBI:57540"/>
    </ligand>
</feature>
<feature type="binding site" evidence="1">
    <location>
        <begin position="117"/>
        <end position="119"/>
    </location>
    <ligand>
        <name>NAD(+)</name>
        <dbReference type="ChEBI" id="CHEBI:57540"/>
    </ligand>
</feature>
<feature type="binding site" evidence="1">
    <location>
        <position position="119"/>
    </location>
    <ligand>
        <name>substrate</name>
    </ligand>
</feature>
<feature type="binding site" evidence="1">
    <location>
        <position position="153"/>
    </location>
    <ligand>
        <name>substrate</name>
    </ligand>
</feature>
<feature type="binding site" evidence="1">
    <location>
        <position position="227"/>
    </location>
    <ligand>
        <name>NAD(+)</name>
        <dbReference type="ChEBI" id="CHEBI:57540"/>
    </ligand>
</feature>
<dbReference type="EC" id="1.1.1.37" evidence="1"/>
<dbReference type="EMBL" id="CU928160">
    <property type="protein sequence ID" value="CAR00192.1"/>
    <property type="molecule type" value="Genomic_DNA"/>
</dbReference>
<dbReference type="RefSeq" id="WP_001307415.1">
    <property type="nucleotide sequence ID" value="NC_011741.1"/>
</dbReference>
<dbReference type="SMR" id="B7M0U8"/>
<dbReference type="KEGG" id="ecr:ECIAI1_3378"/>
<dbReference type="HOGENOM" id="CLU_047181_0_1_6"/>
<dbReference type="GO" id="GO:0005737">
    <property type="term" value="C:cytoplasm"/>
    <property type="evidence" value="ECO:0007669"/>
    <property type="project" value="TreeGrafter"/>
</dbReference>
<dbReference type="GO" id="GO:0030060">
    <property type="term" value="F:L-malate dehydrogenase (NAD+) activity"/>
    <property type="evidence" value="ECO:0007669"/>
    <property type="project" value="UniProtKB-UniRule"/>
</dbReference>
<dbReference type="GO" id="GO:0006108">
    <property type="term" value="P:malate metabolic process"/>
    <property type="evidence" value="ECO:0007669"/>
    <property type="project" value="InterPro"/>
</dbReference>
<dbReference type="GO" id="GO:0006099">
    <property type="term" value="P:tricarboxylic acid cycle"/>
    <property type="evidence" value="ECO:0007669"/>
    <property type="project" value="UniProtKB-UniRule"/>
</dbReference>
<dbReference type="CDD" id="cd01337">
    <property type="entry name" value="MDH_glyoxysomal_mitochondrial"/>
    <property type="match status" value="1"/>
</dbReference>
<dbReference type="FunFam" id="3.40.50.720:FF:000017">
    <property type="entry name" value="Malate dehydrogenase"/>
    <property type="match status" value="1"/>
</dbReference>
<dbReference type="FunFam" id="3.90.110.10:FF:000001">
    <property type="entry name" value="Malate dehydrogenase"/>
    <property type="match status" value="1"/>
</dbReference>
<dbReference type="Gene3D" id="3.90.110.10">
    <property type="entry name" value="Lactate dehydrogenase/glycoside hydrolase, family 4, C-terminal"/>
    <property type="match status" value="1"/>
</dbReference>
<dbReference type="Gene3D" id="3.40.50.720">
    <property type="entry name" value="NAD(P)-binding Rossmann-like Domain"/>
    <property type="match status" value="1"/>
</dbReference>
<dbReference type="HAMAP" id="MF_01516">
    <property type="entry name" value="Malate_dehydrog_1"/>
    <property type="match status" value="1"/>
</dbReference>
<dbReference type="InterPro" id="IPR001557">
    <property type="entry name" value="L-lactate/malate_DH"/>
</dbReference>
<dbReference type="InterPro" id="IPR022383">
    <property type="entry name" value="Lactate/malate_DH_C"/>
</dbReference>
<dbReference type="InterPro" id="IPR001236">
    <property type="entry name" value="Lactate/malate_DH_N"/>
</dbReference>
<dbReference type="InterPro" id="IPR015955">
    <property type="entry name" value="Lactate_DH/Glyco_Ohase_4_C"/>
</dbReference>
<dbReference type="InterPro" id="IPR001252">
    <property type="entry name" value="Malate_DH_AS"/>
</dbReference>
<dbReference type="InterPro" id="IPR010097">
    <property type="entry name" value="Malate_DH_type1"/>
</dbReference>
<dbReference type="InterPro" id="IPR023958">
    <property type="entry name" value="Malate_DH_type1_bac"/>
</dbReference>
<dbReference type="InterPro" id="IPR036291">
    <property type="entry name" value="NAD(P)-bd_dom_sf"/>
</dbReference>
<dbReference type="NCBIfam" id="TIGR01772">
    <property type="entry name" value="MDH_euk_gproteo"/>
    <property type="match status" value="1"/>
</dbReference>
<dbReference type="PANTHER" id="PTHR11540">
    <property type="entry name" value="MALATE AND LACTATE DEHYDROGENASE"/>
    <property type="match status" value="1"/>
</dbReference>
<dbReference type="PANTHER" id="PTHR11540:SF16">
    <property type="entry name" value="MALATE DEHYDROGENASE, MITOCHONDRIAL"/>
    <property type="match status" value="1"/>
</dbReference>
<dbReference type="Pfam" id="PF02866">
    <property type="entry name" value="Ldh_1_C"/>
    <property type="match status" value="1"/>
</dbReference>
<dbReference type="Pfam" id="PF00056">
    <property type="entry name" value="Ldh_1_N"/>
    <property type="match status" value="1"/>
</dbReference>
<dbReference type="PIRSF" id="PIRSF000102">
    <property type="entry name" value="Lac_mal_DH"/>
    <property type="match status" value="1"/>
</dbReference>
<dbReference type="SUPFAM" id="SSF56327">
    <property type="entry name" value="LDH C-terminal domain-like"/>
    <property type="match status" value="1"/>
</dbReference>
<dbReference type="SUPFAM" id="SSF51735">
    <property type="entry name" value="NAD(P)-binding Rossmann-fold domains"/>
    <property type="match status" value="1"/>
</dbReference>
<dbReference type="PROSITE" id="PS00068">
    <property type="entry name" value="MDH"/>
    <property type="match status" value="1"/>
</dbReference>
<sequence>MKVAVLGAAGGIGQALALLLKTQLPSGSELSLYDIAPVTPGVAVDLSHIPTAVKIKGFSGEDATPALEGADVVLISAGVARKPGMDRSDLFNVNAGIVKNLVQQVAKTCPKACIGIITNPVNTTVAIAAEVLKKAGVYDKNKLFGVTTLDIIRSNTFVAELKGKQPGEVEVPVIGGHSGVTILPLLSQVPGVSFTEQEVADLTKRIQNAGTEVVEAKAGGGSATLSMGQAAARFGLSLVRALQGEQGVVECAYVEGDGQYARFFSQPLLLGKNGVEERKSIGTLSAFEQSALEGMLDTLKKDIALGEEFVNK</sequence>
<organism>
    <name type="scientific">Escherichia coli O8 (strain IAI1)</name>
    <dbReference type="NCBI Taxonomy" id="585034"/>
    <lineage>
        <taxon>Bacteria</taxon>
        <taxon>Pseudomonadati</taxon>
        <taxon>Pseudomonadota</taxon>
        <taxon>Gammaproteobacteria</taxon>
        <taxon>Enterobacterales</taxon>
        <taxon>Enterobacteriaceae</taxon>
        <taxon>Escherichia</taxon>
    </lineage>
</organism>
<gene>
    <name evidence="1" type="primary">mdh</name>
    <name type="ordered locus">ECIAI1_3378</name>
</gene>
<evidence type="ECO:0000255" key="1">
    <source>
        <dbReference type="HAMAP-Rule" id="MF_01516"/>
    </source>
</evidence>
<proteinExistence type="inferred from homology"/>
<accession>B7M0U8</accession>
<reference key="1">
    <citation type="journal article" date="2009" name="PLoS Genet.">
        <title>Organised genome dynamics in the Escherichia coli species results in highly diverse adaptive paths.</title>
        <authorList>
            <person name="Touchon M."/>
            <person name="Hoede C."/>
            <person name="Tenaillon O."/>
            <person name="Barbe V."/>
            <person name="Baeriswyl S."/>
            <person name="Bidet P."/>
            <person name="Bingen E."/>
            <person name="Bonacorsi S."/>
            <person name="Bouchier C."/>
            <person name="Bouvet O."/>
            <person name="Calteau A."/>
            <person name="Chiapello H."/>
            <person name="Clermont O."/>
            <person name="Cruveiller S."/>
            <person name="Danchin A."/>
            <person name="Diard M."/>
            <person name="Dossat C."/>
            <person name="Karoui M.E."/>
            <person name="Frapy E."/>
            <person name="Garry L."/>
            <person name="Ghigo J.M."/>
            <person name="Gilles A.M."/>
            <person name="Johnson J."/>
            <person name="Le Bouguenec C."/>
            <person name="Lescat M."/>
            <person name="Mangenot S."/>
            <person name="Martinez-Jehanne V."/>
            <person name="Matic I."/>
            <person name="Nassif X."/>
            <person name="Oztas S."/>
            <person name="Petit M.A."/>
            <person name="Pichon C."/>
            <person name="Rouy Z."/>
            <person name="Ruf C.S."/>
            <person name="Schneider D."/>
            <person name="Tourret J."/>
            <person name="Vacherie B."/>
            <person name="Vallenet D."/>
            <person name="Medigue C."/>
            <person name="Rocha E.P.C."/>
            <person name="Denamur E."/>
        </authorList>
    </citation>
    <scope>NUCLEOTIDE SEQUENCE [LARGE SCALE GENOMIC DNA]</scope>
    <source>
        <strain>IAI1</strain>
    </source>
</reference>